<evidence type="ECO:0000255" key="1">
    <source>
        <dbReference type="HAMAP-Rule" id="MF_01325"/>
    </source>
</evidence>
<evidence type="ECO:0000305" key="2"/>
<proteinExistence type="inferred from homology"/>
<accession>Q3A9R6</accession>
<reference key="1">
    <citation type="journal article" date="2005" name="PLoS Genet.">
        <title>Life in hot carbon monoxide: the complete genome sequence of Carboxydothermus hydrogenoformans Z-2901.</title>
        <authorList>
            <person name="Wu M."/>
            <person name="Ren Q."/>
            <person name="Durkin A.S."/>
            <person name="Daugherty S.C."/>
            <person name="Brinkac L.M."/>
            <person name="Dodson R.J."/>
            <person name="Madupu R."/>
            <person name="Sullivan S.A."/>
            <person name="Kolonay J.F."/>
            <person name="Nelson W.C."/>
            <person name="Tallon L.J."/>
            <person name="Jones K.M."/>
            <person name="Ulrich L.E."/>
            <person name="Gonzalez J.M."/>
            <person name="Zhulin I.B."/>
            <person name="Robb F.T."/>
            <person name="Eisen J.A."/>
        </authorList>
    </citation>
    <scope>NUCLEOTIDE SEQUENCE [LARGE SCALE GENOMIC DNA]</scope>
    <source>
        <strain>ATCC BAA-161 / DSM 6008 / Z-2901</strain>
    </source>
</reference>
<sequence length="209" mass="22811">MPKGILGRKVGMTQIFTEDGRAIPVTVIEAGPCVVVQKKTIANDGYNAIQLGFGEIKESKVNKPLKGHFNRANVKPMRYLREIRVENIDAYEVGQEIKVDIFTVGEKVDVTGISKGKGFAGGIKRHGFHRGPMAHGSKYHRRPGSLGAKGPARVFLGRKLPGRLGMERVTIQNLEVVKVDPERNLLVIKGSVPGIRGSLLIIKEAVKGK</sequence>
<comment type="function">
    <text evidence="1">One of the primary rRNA binding proteins, it binds directly near the 3'-end of the 23S rRNA, where it nucleates assembly of the 50S subunit.</text>
</comment>
<comment type="subunit">
    <text evidence="1">Part of the 50S ribosomal subunit. Forms a cluster with proteins L14 and L19.</text>
</comment>
<comment type="similarity">
    <text evidence="1">Belongs to the universal ribosomal protein uL3 family.</text>
</comment>
<organism>
    <name type="scientific">Carboxydothermus hydrogenoformans (strain ATCC BAA-161 / DSM 6008 / Z-2901)</name>
    <dbReference type="NCBI Taxonomy" id="246194"/>
    <lineage>
        <taxon>Bacteria</taxon>
        <taxon>Bacillati</taxon>
        <taxon>Bacillota</taxon>
        <taxon>Clostridia</taxon>
        <taxon>Thermoanaerobacterales</taxon>
        <taxon>Thermoanaerobacteraceae</taxon>
        <taxon>Carboxydothermus</taxon>
    </lineage>
</organism>
<gene>
    <name evidence="1" type="primary">rplC</name>
    <name type="ordered locus">CHY_2309</name>
</gene>
<feature type="chain" id="PRO_0000241330" description="Large ribosomal subunit protein uL3">
    <location>
        <begin position="1"/>
        <end position="209"/>
    </location>
</feature>
<protein>
    <recommendedName>
        <fullName evidence="1">Large ribosomal subunit protein uL3</fullName>
    </recommendedName>
    <alternativeName>
        <fullName evidence="2">50S ribosomal protein L3</fullName>
    </alternativeName>
</protein>
<keyword id="KW-1185">Reference proteome</keyword>
<keyword id="KW-0687">Ribonucleoprotein</keyword>
<keyword id="KW-0689">Ribosomal protein</keyword>
<keyword id="KW-0694">RNA-binding</keyword>
<keyword id="KW-0699">rRNA-binding</keyword>
<name>RL3_CARHZ</name>
<dbReference type="EMBL" id="CP000141">
    <property type="protein sequence ID" value="ABB15569.1"/>
    <property type="molecule type" value="Genomic_DNA"/>
</dbReference>
<dbReference type="RefSeq" id="WP_011345191.1">
    <property type="nucleotide sequence ID" value="NC_007503.1"/>
</dbReference>
<dbReference type="SMR" id="Q3A9R6"/>
<dbReference type="FunCoup" id="Q3A9R6">
    <property type="interactions" value="472"/>
</dbReference>
<dbReference type="STRING" id="246194.CHY_2309"/>
<dbReference type="KEGG" id="chy:CHY_2309"/>
<dbReference type="eggNOG" id="COG0087">
    <property type="taxonomic scope" value="Bacteria"/>
</dbReference>
<dbReference type="HOGENOM" id="CLU_044142_4_1_9"/>
<dbReference type="InParanoid" id="Q3A9R6"/>
<dbReference type="OrthoDB" id="9806135at2"/>
<dbReference type="Proteomes" id="UP000002706">
    <property type="component" value="Chromosome"/>
</dbReference>
<dbReference type="GO" id="GO:0022625">
    <property type="term" value="C:cytosolic large ribosomal subunit"/>
    <property type="evidence" value="ECO:0007669"/>
    <property type="project" value="TreeGrafter"/>
</dbReference>
<dbReference type="GO" id="GO:0019843">
    <property type="term" value="F:rRNA binding"/>
    <property type="evidence" value="ECO:0007669"/>
    <property type="project" value="UniProtKB-UniRule"/>
</dbReference>
<dbReference type="GO" id="GO:0003735">
    <property type="term" value="F:structural constituent of ribosome"/>
    <property type="evidence" value="ECO:0007669"/>
    <property type="project" value="InterPro"/>
</dbReference>
<dbReference type="GO" id="GO:0006412">
    <property type="term" value="P:translation"/>
    <property type="evidence" value="ECO:0007669"/>
    <property type="project" value="UniProtKB-UniRule"/>
</dbReference>
<dbReference type="FunFam" id="2.40.30.10:FF:000004">
    <property type="entry name" value="50S ribosomal protein L3"/>
    <property type="match status" value="1"/>
</dbReference>
<dbReference type="FunFam" id="3.30.160.810:FF:000001">
    <property type="entry name" value="50S ribosomal protein L3"/>
    <property type="match status" value="1"/>
</dbReference>
<dbReference type="Gene3D" id="3.30.160.810">
    <property type="match status" value="1"/>
</dbReference>
<dbReference type="Gene3D" id="2.40.30.10">
    <property type="entry name" value="Translation factors"/>
    <property type="match status" value="1"/>
</dbReference>
<dbReference type="HAMAP" id="MF_01325_B">
    <property type="entry name" value="Ribosomal_uL3_B"/>
    <property type="match status" value="1"/>
</dbReference>
<dbReference type="InterPro" id="IPR000597">
    <property type="entry name" value="Ribosomal_uL3"/>
</dbReference>
<dbReference type="InterPro" id="IPR019927">
    <property type="entry name" value="Ribosomal_uL3_bac/org-type"/>
</dbReference>
<dbReference type="InterPro" id="IPR019926">
    <property type="entry name" value="Ribosomal_uL3_CS"/>
</dbReference>
<dbReference type="InterPro" id="IPR009000">
    <property type="entry name" value="Transl_B-barrel_sf"/>
</dbReference>
<dbReference type="NCBIfam" id="TIGR03625">
    <property type="entry name" value="L3_bact"/>
    <property type="match status" value="1"/>
</dbReference>
<dbReference type="PANTHER" id="PTHR11229">
    <property type="entry name" value="50S RIBOSOMAL PROTEIN L3"/>
    <property type="match status" value="1"/>
</dbReference>
<dbReference type="PANTHER" id="PTHR11229:SF16">
    <property type="entry name" value="LARGE RIBOSOMAL SUBUNIT PROTEIN UL3C"/>
    <property type="match status" value="1"/>
</dbReference>
<dbReference type="Pfam" id="PF00297">
    <property type="entry name" value="Ribosomal_L3"/>
    <property type="match status" value="1"/>
</dbReference>
<dbReference type="SUPFAM" id="SSF50447">
    <property type="entry name" value="Translation proteins"/>
    <property type="match status" value="1"/>
</dbReference>
<dbReference type="PROSITE" id="PS00474">
    <property type="entry name" value="RIBOSOMAL_L3"/>
    <property type="match status" value="1"/>
</dbReference>